<accession>P63056</accession>
<accession>Q8BKV2</accession>
<accession>Q8BLL6</accession>
<accession>Q8QZW0</accession>
<accession>Q8R4K3</accession>
<accession>Q8R4K4</accession>
<gene>
    <name type="primary">Olfm3</name>
    <name type="synonym">Noe3</name>
</gene>
<proteinExistence type="evidence at protein level"/>
<dbReference type="EMBL" id="AF442824">
    <property type="protein sequence ID" value="AAL87043.1"/>
    <property type="molecule type" value="mRNA"/>
</dbReference>
<dbReference type="EMBL" id="AF442825">
    <property type="protein sequence ID" value="AAL87044.1"/>
    <property type="molecule type" value="mRNA"/>
</dbReference>
<dbReference type="EMBL" id="AK038569">
    <property type="protein sequence ID" value="BAC30048.1"/>
    <property type="molecule type" value="mRNA"/>
</dbReference>
<dbReference type="EMBL" id="AK044325">
    <property type="protein sequence ID" value="BAC31867.1"/>
    <property type="molecule type" value="mRNA"/>
</dbReference>
<dbReference type="EMBL" id="AK044605">
    <property type="protein sequence ID" value="BAC32000.1"/>
    <property type="molecule type" value="mRNA"/>
</dbReference>
<dbReference type="EMBL" id="AK045482">
    <property type="protein sequence ID" value="BAC32389.1"/>
    <property type="molecule type" value="mRNA"/>
</dbReference>
<dbReference type="EMBL" id="AK049612">
    <property type="protein sequence ID" value="BAC33841.1"/>
    <property type="molecule type" value="mRNA"/>
</dbReference>
<dbReference type="EMBL" id="AK079315">
    <property type="protein sequence ID" value="BAC37605.1"/>
    <property type="molecule type" value="mRNA"/>
</dbReference>
<dbReference type="CCDS" id="CCDS17779.1">
    <molecule id="P63056-2"/>
</dbReference>
<dbReference type="CCDS" id="CCDS17780.1"/>
<dbReference type="RefSeq" id="NP_694797.1">
    <molecule id="P63056-1"/>
    <property type="nucleotide sequence ID" value="NM_153157.3"/>
</dbReference>
<dbReference type="RefSeq" id="NP_703188.1">
    <molecule id="P63056-2"/>
    <property type="nucleotide sequence ID" value="NM_153458.3"/>
</dbReference>
<dbReference type="SMR" id="P63056"/>
<dbReference type="BioGRID" id="230899">
    <property type="interactions" value="3"/>
</dbReference>
<dbReference type="FunCoup" id="P63056">
    <property type="interactions" value="278"/>
</dbReference>
<dbReference type="STRING" id="10090.ENSMUSP00000060985"/>
<dbReference type="GlyCosmos" id="P63056">
    <property type="glycosylation" value="5 sites, No reported glycans"/>
</dbReference>
<dbReference type="GlyGen" id="P63056">
    <property type="glycosylation" value="7 sites, 3 N-linked glycans (3 sites), 1 O-linked glycan (2 sites)"/>
</dbReference>
<dbReference type="iPTMnet" id="P63056"/>
<dbReference type="PhosphoSitePlus" id="P63056"/>
<dbReference type="PaxDb" id="10090-ENSMUSP00000060985"/>
<dbReference type="PeptideAtlas" id="P63056"/>
<dbReference type="ProteomicsDB" id="252981"/>
<dbReference type="ProteomicsDB" id="252982">
    <molecule id="P63056-2"/>
</dbReference>
<dbReference type="Antibodypedia" id="33701">
    <property type="antibodies" value="154 antibodies from 22 providers"/>
</dbReference>
<dbReference type="Ensembl" id="ENSMUST00000051309.9">
    <molecule id="P63056-1"/>
    <property type="protein sequence ID" value="ENSMUSP00000060985.9"/>
    <property type="gene ID" value="ENSMUSG00000027965.16"/>
</dbReference>
<dbReference type="Ensembl" id="ENSMUST00000081752.13">
    <molecule id="P63056-2"/>
    <property type="protein sequence ID" value="ENSMUSP00000080448.7"/>
    <property type="gene ID" value="ENSMUSG00000027965.16"/>
</dbReference>
<dbReference type="GeneID" id="229759"/>
<dbReference type="KEGG" id="mmu:229759"/>
<dbReference type="UCSC" id="uc008rbn.2">
    <property type="organism name" value="mouse"/>
</dbReference>
<dbReference type="AGR" id="MGI:2387329"/>
<dbReference type="CTD" id="118427"/>
<dbReference type="MGI" id="MGI:2387329">
    <property type="gene designation" value="Olfm3"/>
</dbReference>
<dbReference type="VEuPathDB" id="HostDB:ENSMUSG00000027965"/>
<dbReference type="eggNOG" id="KOG3545">
    <property type="taxonomic scope" value="Eukaryota"/>
</dbReference>
<dbReference type="GeneTree" id="ENSGT00940000156998"/>
<dbReference type="HOGENOM" id="CLU_035236_0_0_1"/>
<dbReference type="InParanoid" id="P63056"/>
<dbReference type="OMA" id="XELKEKM"/>
<dbReference type="OrthoDB" id="8626508at2759"/>
<dbReference type="PhylomeDB" id="P63056"/>
<dbReference type="TreeFam" id="TF315964"/>
<dbReference type="BioGRID-ORCS" id="229759">
    <property type="hits" value="1 hit in 75 CRISPR screens"/>
</dbReference>
<dbReference type="CD-CODE" id="CE726F99">
    <property type="entry name" value="Postsynaptic density"/>
</dbReference>
<dbReference type="ChiTaRS" id="Olfm3">
    <property type="organism name" value="mouse"/>
</dbReference>
<dbReference type="PRO" id="PR:P63056"/>
<dbReference type="Proteomes" id="UP000000589">
    <property type="component" value="Chromosome 3"/>
</dbReference>
<dbReference type="RNAct" id="P63056">
    <property type="molecule type" value="protein"/>
</dbReference>
<dbReference type="Bgee" id="ENSMUSG00000027965">
    <property type="expression patterns" value="Expressed in cerebellum lobe and 90 other cell types or tissues"/>
</dbReference>
<dbReference type="ExpressionAtlas" id="P63056">
    <property type="expression patterns" value="baseline and differential"/>
</dbReference>
<dbReference type="GO" id="GO:0032281">
    <property type="term" value="C:AMPA glutamate receptor complex"/>
    <property type="evidence" value="ECO:0000314"/>
    <property type="project" value="MGI"/>
</dbReference>
<dbReference type="GO" id="GO:0005615">
    <property type="term" value="C:extracellular space"/>
    <property type="evidence" value="ECO:0000314"/>
    <property type="project" value="MGI"/>
</dbReference>
<dbReference type="GO" id="GO:0005794">
    <property type="term" value="C:Golgi apparatus"/>
    <property type="evidence" value="ECO:0000314"/>
    <property type="project" value="MGI"/>
</dbReference>
<dbReference type="GO" id="GO:0045202">
    <property type="term" value="C:synapse"/>
    <property type="evidence" value="ECO:0007669"/>
    <property type="project" value="UniProtKB-SubCell"/>
</dbReference>
<dbReference type="GO" id="GO:0042462">
    <property type="term" value="P:eye photoreceptor cell development"/>
    <property type="evidence" value="ECO:0007669"/>
    <property type="project" value="Ensembl"/>
</dbReference>
<dbReference type="InterPro" id="IPR022082">
    <property type="entry name" value="Noelin_dom"/>
</dbReference>
<dbReference type="InterPro" id="IPR003112">
    <property type="entry name" value="Olfac-like_dom"/>
</dbReference>
<dbReference type="InterPro" id="IPR050605">
    <property type="entry name" value="Olfactomedin-like_domain"/>
</dbReference>
<dbReference type="InterPro" id="IPR011044">
    <property type="entry name" value="Quino_amine_DH_bsu"/>
</dbReference>
<dbReference type="PANTHER" id="PTHR23192:SF36">
    <property type="entry name" value="NOELIN-3"/>
    <property type="match status" value="1"/>
</dbReference>
<dbReference type="PANTHER" id="PTHR23192">
    <property type="entry name" value="OLFACTOMEDIN-RELATED"/>
    <property type="match status" value="1"/>
</dbReference>
<dbReference type="Pfam" id="PF12308">
    <property type="entry name" value="Noelin-1"/>
    <property type="match status" value="1"/>
</dbReference>
<dbReference type="Pfam" id="PF02191">
    <property type="entry name" value="OLF"/>
    <property type="match status" value="1"/>
</dbReference>
<dbReference type="SMART" id="SM00284">
    <property type="entry name" value="OLF"/>
    <property type="match status" value="1"/>
</dbReference>
<dbReference type="SUPFAM" id="SSF50969">
    <property type="entry name" value="YVTN repeat-like/Quinoprotein amine dehydrogenase"/>
    <property type="match status" value="1"/>
</dbReference>
<dbReference type="PROSITE" id="PS51132">
    <property type="entry name" value="OLF"/>
    <property type="match status" value="1"/>
</dbReference>
<reference key="1">
    <citation type="journal article" date="2002" name="Hum. Mol. Genet.">
        <title>Optimedin: a novel olfactomedin-related protein that interacts with myocilin.</title>
        <authorList>
            <person name="Torrado M."/>
            <person name="Trivedi R."/>
            <person name="Zinovieva R."/>
            <person name="Karavanova I."/>
            <person name="Tomarev S.I."/>
        </authorList>
    </citation>
    <scope>NUCLEOTIDE SEQUENCE [MRNA] (ISOFORMS 1 AND 2)</scope>
    <scope>INTERACTION WITH MYOC</scope>
    <source>
        <strain>129/Sv</strain>
        <tissue>Brain</tissue>
    </source>
</reference>
<reference key="2">
    <citation type="journal article" date="2005" name="Science">
        <title>The transcriptional landscape of the mammalian genome.</title>
        <authorList>
            <person name="Carninci P."/>
            <person name="Kasukawa T."/>
            <person name="Katayama S."/>
            <person name="Gough J."/>
            <person name="Frith M.C."/>
            <person name="Maeda N."/>
            <person name="Oyama R."/>
            <person name="Ravasi T."/>
            <person name="Lenhard B."/>
            <person name="Wells C."/>
            <person name="Kodzius R."/>
            <person name="Shimokawa K."/>
            <person name="Bajic V.B."/>
            <person name="Brenner S.E."/>
            <person name="Batalov S."/>
            <person name="Forrest A.R."/>
            <person name="Zavolan M."/>
            <person name="Davis M.J."/>
            <person name="Wilming L.G."/>
            <person name="Aidinis V."/>
            <person name="Allen J.E."/>
            <person name="Ambesi-Impiombato A."/>
            <person name="Apweiler R."/>
            <person name="Aturaliya R.N."/>
            <person name="Bailey T.L."/>
            <person name="Bansal M."/>
            <person name="Baxter L."/>
            <person name="Beisel K.W."/>
            <person name="Bersano T."/>
            <person name="Bono H."/>
            <person name="Chalk A.M."/>
            <person name="Chiu K.P."/>
            <person name="Choudhary V."/>
            <person name="Christoffels A."/>
            <person name="Clutterbuck D.R."/>
            <person name="Crowe M.L."/>
            <person name="Dalla E."/>
            <person name="Dalrymple B.P."/>
            <person name="de Bono B."/>
            <person name="Della Gatta G."/>
            <person name="di Bernardo D."/>
            <person name="Down T."/>
            <person name="Engstrom P."/>
            <person name="Fagiolini M."/>
            <person name="Faulkner G."/>
            <person name="Fletcher C.F."/>
            <person name="Fukushima T."/>
            <person name="Furuno M."/>
            <person name="Futaki S."/>
            <person name="Gariboldi M."/>
            <person name="Georgii-Hemming P."/>
            <person name="Gingeras T.R."/>
            <person name="Gojobori T."/>
            <person name="Green R.E."/>
            <person name="Gustincich S."/>
            <person name="Harbers M."/>
            <person name="Hayashi Y."/>
            <person name="Hensch T.K."/>
            <person name="Hirokawa N."/>
            <person name="Hill D."/>
            <person name="Huminiecki L."/>
            <person name="Iacono M."/>
            <person name="Ikeo K."/>
            <person name="Iwama A."/>
            <person name="Ishikawa T."/>
            <person name="Jakt M."/>
            <person name="Kanapin A."/>
            <person name="Katoh M."/>
            <person name="Kawasawa Y."/>
            <person name="Kelso J."/>
            <person name="Kitamura H."/>
            <person name="Kitano H."/>
            <person name="Kollias G."/>
            <person name="Krishnan S.P."/>
            <person name="Kruger A."/>
            <person name="Kummerfeld S.K."/>
            <person name="Kurochkin I.V."/>
            <person name="Lareau L.F."/>
            <person name="Lazarevic D."/>
            <person name="Lipovich L."/>
            <person name="Liu J."/>
            <person name="Liuni S."/>
            <person name="McWilliam S."/>
            <person name="Madan Babu M."/>
            <person name="Madera M."/>
            <person name="Marchionni L."/>
            <person name="Matsuda H."/>
            <person name="Matsuzawa S."/>
            <person name="Miki H."/>
            <person name="Mignone F."/>
            <person name="Miyake S."/>
            <person name="Morris K."/>
            <person name="Mottagui-Tabar S."/>
            <person name="Mulder N."/>
            <person name="Nakano N."/>
            <person name="Nakauchi H."/>
            <person name="Ng P."/>
            <person name="Nilsson R."/>
            <person name="Nishiguchi S."/>
            <person name="Nishikawa S."/>
            <person name="Nori F."/>
            <person name="Ohara O."/>
            <person name="Okazaki Y."/>
            <person name="Orlando V."/>
            <person name="Pang K.C."/>
            <person name="Pavan W.J."/>
            <person name="Pavesi G."/>
            <person name="Pesole G."/>
            <person name="Petrovsky N."/>
            <person name="Piazza S."/>
            <person name="Reed J."/>
            <person name="Reid J.F."/>
            <person name="Ring B.Z."/>
            <person name="Ringwald M."/>
            <person name="Rost B."/>
            <person name="Ruan Y."/>
            <person name="Salzberg S.L."/>
            <person name="Sandelin A."/>
            <person name="Schneider C."/>
            <person name="Schoenbach C."/>
            <person name="Sekiguchi K."/>
            <person name="Semple C.A."/>
            <person name="Seno S."/>
            <person name="Sessa L."/>
            <person name="Sheng Y."/>
            <person name="Shibata Y."/>
            <person name="Shimada H."/>
            <person name="Shimada K."/>
            <person name="Silva D."/>
            <person name="Sinclair B."/>
            <person name="Sperling S."/>
            <person name="Stupka E."/>
            <person name="Sugiura K."/>
            <person name="Sultana R."/>
            <person name="Takenaka Y."/>
            <person name="Taki K."/>
            <person name="Tammoja K."/>
            <person name="Tan S.L."/>
            <person name="Tang S."/>
            <person name="Taylor M.S."/>
            <person name="Tegner J."/>
            <person name="Teichmann S.A."/>
            <person name="Ueda H.R."/>
            <person name="van Nimwegen E."/>
            <person name="Verardo R."/>
            <person name="Wei C.L."/>
            <person name="Yagi K."/>
            <person name="Yamanishi H."/>
            <person name="Zabarovsky E."/>
            <person name="Zhu S."/>
            <person name="Zimmer A."/>
            <person name="Hide W."/>
            <person name="Bult C."/>
            <person name="Grimmond S.M."/>
            <person name="Teasdale R.D."/>
            <person name="Liu E.T."/>
            <person name="Brusic V."/>
            <person name="Quackenbush J."/>
            <person name="Wahlestedt C."/>
            <person name="Mattick J.S."/>
            <person name="Hume D.A."/>
            <person name="Kai C."/>
            <person name="Sasaki D."/>
            <person name="Tomaru Y."/>
            <person name="Fukuda S."/>
            <person name="Kanamori-Katayama M."/>
            <person name="Suzuki M."/>
            <person name="Aoki J."/>
            <person name="Arakawa T."/>
            <person name="Iida J."/>
            <person name="Imamura K."/>
            <person name="Itoh M."/>
            <person name="Kato T."/>
            <person name="Kawaji H."/>
            <person name="Kawagashira N."/>
            <person name="Kawashima T."/>
            <person name="Kojima M."/>
            <person name="Kondo S."/>
            <person name="Konno H."/>
            <person name="Nakano K."/>
            <person name="Ninomiya N."/>
            <person name="Nishio T."/>
            <person name="Okada M."/>
            <person name="Plessy C."/>
            <person name="Shibata K."/>
            <person name="Shiraki T."/>
            <person name="Suzuki S."/>
            <person name="Tagami M."/>
            <person name="Waki K."/>
            <person name="Watahiki A."/>
            <person name="Okamura-Oho Y."/>
            <person name="Suzuki H."/>
            <person name="Kawai J."/>
            <person name="Hayashizaki Y."/>
        </authorList>
    </citation>
    <scope>NUCLEOTIDE SEQUENCE [LARGE SCALE MRNA] (ISOFORM 2)</scope>
    <source>
        <strain>C57BL/6J</strain>
        <tissue>Brain</tissue>
        <tissue>Cerebellum</tissue>
        <tissue>Hypothalamus</tissue>
        <tissue>Retina</tissue>
        <tissue>Spinal cord</tissue>
    </source>
</reference>
<reference key="3">
    <citation type="journal article" date="2011" name="Invest. Ophthalmol. Vis. Sci.">
        <title>Olfactomedin 2: expression in the eye and interaction with other olfactomedin domain-containing proteins.</title>
        <authorList>
            <person name="Sultana A."/>
            <person name="Nakaya N."/>
            <person name="Senatorov V.V."/>
            <person name="Tomarev S.I."/>
        </authorList>
    </citation>
    <scope>DEVELOPMENTAL STAGE</scope>
</reference>
<reference key="4">
    <citation type="journal article" date="2012" name="Neuron">
        <title>High-resolution proteomics unravel architecture and molecular diversity of native AMPA receptor complexes.</title>
        <authorList>
            <person name="Schwenk J."/>
            <person name="Harmel N."/>
            <person name="Brechet A."/>
            <person name="Zolles G."/>
            <person name="Berkefeld H."/>
            <person name="Muller C.S."/>
            <person name="Bildl W."/>
            <person name="Baehrens D."/>
            <person name="Huber B."/>
            <person name="Kulik A."/>
            <person name="Klocker N."/>
            <person name="Schulte U."/>
            <person name="Fakler B."/>
        </authorList>
    </citation>
    <scope>IDENTIFICATION IN AMPAR COMPLEX</scope>
    <scope>SUBCELLULAR LOCATION</scope>
    <scope>TISSUE SPECIFICITY</scope>
</reference>
<sequence length="478" mass="54886">MSAPLLKLGAVLSTMAMISNWMSQTLPSLVGLNTTRLSAPDTLTQISPKEGWQVYSSAQDPDGRCICTVVAPEQNLCSRDAKSRQLRQLLEKVQNMSQSIEVLNLRTQRDFQYVLKMETQMKGLKAKFRQIEDDRKTLMTKHFQELKEKMDELLPLIPVLEQYKTDAKLITQFKEEIRNLSSVLTGIQEEIGAYDYEELHQRVLSLETRLRDCMKKLTCGKLMKITGPITVKTSGTRFGAWMTDPLASEKNNRVWYMDSYTNNKIVREYKSIADFVSGAESRTYNLPFKWAGTNHVVYNGSLYFNKYQSNIIIKYSFDLGRVLAQRSLEYAGFHNVYPYTWGGFSDIDLMADEIGLWAVYATNQNAGNIVISQLNQDTLEVMKSWSTGYPKRSAGESFMICGTLYVTNSHLTGAKVYYSYSTKTSTYEYTDIPFHNQYFHISMLDYNARDRALYAWNNGHQVLFNVTLFHIIKTEDDT</sequence>
<organism>
    <name type="scientific">Mus musculus</name>
    <name type="common">Mouse</name>
    <dbReference type="NCBI Taxonomy" id="10090"/>
    <lineage>
        <taxon>Eukaryota</taxon>
        <taxon>Metazoa</taxon>
        <taxon>Chordata</taxon>
        <taxon>Craniata</taxon>
        <taxon>Vertebrata</taxon>
        <taxon>Euteleostomi</taxon>
        <taxon>Mammalia</taxon>
        <taxon>Eutheria</taxon>
        <taxon>Euarchontoglires</taxon>
        <taxon>Glires</taxon>
        <taxon>Rodentia</taxon>
        <taxon>Myomorpha</taxon>
        <taxon>Muroidea</taxon>
        <taxon>Muridae</taxon>
        <taxon>Murinae</taxon>
        <taxon>Mus</taxon>
        <taxon>Mus</taxon>
    </lineage>
</organism>
<evidence type="ECO:0000250" key="1">
    <source>
        <dbReference type="UniProtKB" id="Q96PB7"/>
    </source>
</evidence>
<evidence type="ECO:0000255" key="2"/>
<evidence type="ECO:0000255" key="3">
    <source>
        <dbReference type="PROSITE-ProRule" id="PRU00446"/>
    </source>
</evidence>
<evidence type="ECO:0000269" key="4">
    <source>
    </source>
</evidence>
<evidence type="ECO:0000269" key="5">
    <source>
    </source>
</evidence>
<evidence type="ECO:0000269" key="6">
    <source>
    </source>
</evidence>
<evidence type="ECO:0000303" key="7">
    <source>
    </source>
</evidence>
<evidence type="ECO:0000303" key="8">
    <source>
    </source>
</evidence>
<evidence type="ECO:0000305" key="9"/>
<evidence type="ECO:0000305" key="10">
    <source>
    </source>
</evidence>
<feature type="signal peptide" evidence="2">
    <location>
        <begin position="1"/>
        <end position="23"/>
    </location>
</feature>
<feature type="chain" id="PRO_0000020081" description="Noelin-3">
    <location>
        <begin position="24"/>
        <end position="478"/>
    </location>
</feature>
<feature type="domain" description="Olfactomedin-like" evidence="3">
    <location>
        <begin position="218"/>
        <end position="470"/>
    </location>
</feature>
<feature type="coiled-coil region" evidence="2">
    <location>
        <begin position="77"/>
        <end position="217"/>
    </location>
</feature>
<feature type="glycosylation site" description="N-linked (GlcNAc...) asparagine" evidence="2">
    <location>
        <position position="33"/>
    </location>
</feature>
<feature type="glycosylation site" description="N-linked (GlcNAc...) asparagine" evidence="2">
    <location>
        <position position="95"/>
    </location>
</feature>
<feature type="glycosylation site" description="N-linked (GlcNAc...) asparagine" evidence="2">
    <location>
        <position position="179"/>
    </location>
</feature>
<feature type="glycosylation site" description="N-linked (GlcNAc...) asparagine" evidence="2">
    <location>
        <position position="299"/>
    </location>
</feature>
<feature type="glycosylation site" description="N-linked (GlcNAc...) asparagine" evidence="2">
    <location>
        <position position="465"/>
    </location>
</feature>
<feature type="disulfide bond" evidence="3">
    <location>
        <begin position="219"/>
        <end position="401"/>
    </location>
</feature>
<feature type="splice variant" id="VSP_007747" description="In isoform 2." evidence="7 8">
    <original>MSAPLLKLGAVLSTMAMISNWMSQTLPSLVGLNTTRLSAPDTL</original>
    <variation>MQARSSFLNLLLLSLLAGLDPSK</variation>
    <location>
        <begin position="1"/>
        <end position="43"/>
    </location>
</feature>
<feature type="sequence conflict" description="In Ref. 2; BAC31867." evidence="9" ref="2">
    <original>E</original>
    <variation>K</variation>
    <location>
        <position position="118"/>
    </location>
</feature>
<feature type="sequence conflict" description="In Ref. 2; BAC33841." evidence="9" ref="2">
    <original>H</original>
    <variation>P</variation>
    <location>
        <position position="410"/>
    </location>
</feature>
<protein>
    <recommendedName>
        <fullName>Noelin-3</fullName>
    </recommendedName>
    <alternativeName>
        <fullName>Olfactomedin-3</fullName>
    </alternativeName>
    <alternativeName>
        <fullName>Optimedin</fullName>
    </alternativeName>
</protein>
<keyword id="KW-0025">Alternative splicing</keyword>
<keyword id="KW-0175">Coiled coil</keyword>
<keyword id="KW-1015">Disulfide bond</keyword>
<keyword id="KW-0325">Glycoprotein</keyword>
<keyword id="KW-1185">Reference proteome</keyword>
<keyword id="KW-0964">Secreted</keyword>
<keyword id="KW-0732">Signal</keyword>
<keyword id="KW-0770">Synapse</keyword>
<comment type="subunit">
    <text evidence="1 4 6">Peripherally associated with AMPAR complex. AMPAR complex consists of an inner core made of 4 pore-forming GluA/GRIA proteins (GRIA1, GRIA2, GRIA3 and GRIA4) and 4 major auxiliary subunits arranged in a twofold symmetry. One of the two pairs of distinct binding sites is occupied either by CNIH2, CNIH3 or CACNG2, CACNG3. The other harbors CACNG2, CACNG3, CACNG4, CACNG8 or GSG1L. This inner core of AMPAR complex is complemented by outer core constituents binding directly to the GluA/GRIA proteins at sites distinct from the interaction sites of the inner core constituents. Outer core constituents include at least PRRT1, PRRT2, CKAMP44/SHISA9, FRRS1L and NRN1. The proteins of the inner and outer core serve as a platform for other, more peripherally associated AMPAR constituents, including OLFM3. Alone or in combination, these auxiliary subunits control the gating and pharmacology of the AMPAR complex and profoundly impact their biogenesis and protein processing (PubMed:22632720). Homodimer. Interacts with MYOC (PubMed:12019210). Interacts with OLFM2 (By similarity).</text>
</comment>
<comment type="subcellular location">
    <subcellularLocation>
        <location evidence="6">Secreted</location>
    </subcellularLocation>
    <subcellularLocation>
        <location evidence="10">Synapse</location>
    </subcellularLocation>
    <text>Isoform 2 is secreted more efficiently than isoform 1.</text>
</comment>
<comment type="alternative products">
    <event type="alternative splicing"/>
    <isoform>
        <id>P63056-1</id>
        <id>Q8QZW0-1</id>
        <name>1</name>
        <name>B</name>
        <sequence type="displayed"/>
    </isoform>
    <isoform>
        <id>P63056-2</id>
        <id>Q8QZW0-2</id>
        <name>2</name>
        <name>A</name>
        <sequence type="described" ref="VSP_007747"/>
    </isoform>
</comment>
<comment type="tissue specificity">
    <text evidence="6">Expressed in the brain (at protein level).</text>
</comment>
<comment type="developmental stage">
    <text evidence="5">Expressed during embryonic development starting from 7 dpc. Expression increases moderately during embryonic development and remains stable in the postnatal brain.</text>
</comment>
<name>NOE3_MOUSE</name>